<evidence type="ECO:0000250" key="1">
    <source>
        <dbReference type="UniProtKB" id="P38182"/>
    </source>
</evidence>
<evidence type="ECO:0000250" key="2">
    <source>
        <dbReference type="UniProtKB" id="Q2XPP5"/>
    </source>
</evidence>
<evidence type="ECO:0000250" key="3">
    <source>
        <dbReference type="UniProtKB" id="Q8LEM4"/>
    </source>
</evidence>
<evidence type="ECO:0000305" key="4"/>
<dbReference type="EMBL" id="AL606645">
    <property type="protein sequence ID" value="CAE03504.2"/>
    <property type="molecule type" value="Genomic_DNA"/>
</dbReference>
<dbReference type="EMBL" id="AP008210">
    <property type="protein sequence ID" value="BAF15843.1"/>
    <property type="molecule type" value="Genomic_DNA"/>
</dbReference>
<dbReference type="EMBL" id="AP014960">
    <property type="protein sequence ID" value="BAS91092.1"/>
    <property type="molecule type" value="Genomic_DNA"/>
</dbReference>
<dbReference type="EMBL" id="CM000141">
    <property type="protein sequence ID" value="EAZ32042.1"/>
    <property type="molecule type" value="Genomic_DNA"/>
</dbReference>
<dbReference type="EMBL" id="AK121268">
    <property type="protein sequence ID" value="BAH00402.1"/>
    <property type="molecule type" value="mRNA"/>
</dbReference>
<dbReference type="RefSeq" id="XP_015637094.1">
    <property type="nucleotide sequence ID" value="XM_015781608.1"/>
</dbReference>
<dbReference type="SMR" id="Q7XPR1"/>
<dbReference type="FunCoup" id="Q7XPR1">
    <property type="interactions" value="2627"/>
</dbReference>
<dbReference type="STRING" id="39947.Q7XPR1"/>
<dbReference type="PaxDb" id="39947-Q7XPR1"/>
<dbReference type="EnsemblPlants" id="Os04t0624000-01">
    <property type="protein sequence ID" value="Os04t0624000-01"/>
    <property type="gene ID" value="Os04g0624000"/>
</dbReference>
<dbReference type="GeneID" id="4337052"/>
<dbReference type="Gramene" id="Os04t0624000-01">
    <property type="protein sequence ID" value="Os04t0624000-01"/>
    <property type="gene ID" value="Os04g0624000"/>
</dbReference>
<dbReference type="KEGG" id="dosa:Os04g0624000"/>
<dbReference type="KEGG" id="osa:4337052"/>
<dbReference type="eggNOG" id="KOG1654">
    <property type="taxonomic scope" value="Eukaryota"/>
</dbReference>
<dbReference type="HOGENOM" id="CLU_119276_0_1_1"/>
<dbReference type="InParanoid" id="Q7XPR1"/>
<dbReference type="OMA" id="QDWISIN"/>
<dbReference type="OrthoDB" id="6738456at2759"/>
<dbReference type="Proteomes" id="UP000000763">
    <property type="component" value="Chromosome 4"/>
</dbReference>
<dbReference type="Proteomes" id="UP000007752">
    <property type="component" value="Chromosome 4"/>
</dbReference>
<dbReference type="Proteomes" id="UP000059680">
    <property type="component" value="Chromosome 4"/>
</dbReference>
<dbReference type="GO" id="GO:0000421">
    <property type="term" value="C:autophagosome membrane"/>
    <property type="evidence" value="ECO:0000318"/>
    <property type="project" value="GO_Central"/>
</dbReference>
<dbReference type="GO" id="GO:0031410">
    <property type="term" value="C:cytoplasmic vesicle"/>
    <property type="evidence" value="ECO:0007669"/>
    <property type="project" value="UniProtKB-KW"/>
</dbReference>
<dbReference type="GO" id="GO:0005874">
    <property type="term" value="C:microtubule"/>
    <property type="evidence" value="ECO:0007669"/>
    <property type="project" value="UniProtKB-KW"/>
</dbReference>
<dbReference type="GO" id="GO:0008429">
    <property type="term" value="F:phosphatidylethanolamine binding"/>
    <property type="evidence" value="ECO:0000318"/>
    <property type="project" value="GO_Central"/>
</dbReference>
<dbReference type="GO" id="GO:0000045">
    <property type="term" value="P:autophagosome assembly"/>
    <property type="evidence" value="ECO:0000318"/>
    <property type="project" value="GO_Central"/>
</dbReference>
<dbReference type="GO" id="GO:0097352">
    <property type="term" value="P:autophagosome maturation"/>
    <property type="evidence" value="ECO:0000318"/>
    <property type="project" value="GO_Central"/>
</dbReference>
<dbReference type="GO" id="GO:0006995">
    <property type="term" value="P:cellular response to nitrogen starvation"/>
    <property type="evidence" value="ECO:0000318"/>
    <property type="project" value="GO_Central"/>
</dbReference>
<dbReference type="GO" id="GO:0000423">
    <property type="term" value="P:mitophagy"/>
    <property type="evidence" value="ECO:0000318"/>
    <property type="project" value="GO_Central"/>
</dbReference>
<dbReference type="GO" id="GO:0015031">
    <property type="term" value="P:protein transport"/>
    <property type="evidence" value="ECO:0007669"/>
    <property type="project" value="UniProtKB-KW"/>
</dbReference>
<dbReference type="CDD" id="cd16128">
    <property type="entry name" value="Ubl_ATG8"/>
    <property type="match status" value="1"/>
</dbReference>
<dbReference type="FunFam" id="3.10.20.90:FF:000010">
    <property type="entry name" value="Autophagy-related protein"/>
    <property type="match status" value="1"/>
</dbReference>
<dbReference type="Gene3D" id="3.10.20.90">
    <property type="entry name" value="Phosphatidylinositol 3-kinase Catalytic Subunit, Chain A, domain 1"/>
    <property type="match status" value="1"/>
</dbReference>
<dbReference type="InterPro" id="IPR004241">
    <property type="entry name" value="Atg8-like"/>
</dbReference>
<dbReference type="InterPro" id="IPR029071">
    <property type="entry name" value="Ubiquitin-like_domsf"/>
</dbReference>
<dbReference type="PANTHER" id="PTHR10969">
    <property type="entry name" value="MICROTUBULE-ASSOCIATED PROTEINS 1A/1B LIGHT CHAIN 3-RELATED"/>
    <property type="match status" value="1"/>
</dbReference>
<dbReference type="Pfam" id="PF02991">
    <property type="entry name" value="ATG8"/>
    <property type="match status" value="1"/>
</dbReference>
<dbReference type="SUPFAM" id="SSF54236">
    <property type="entry name" value="Ubiquitin-like"/>
    <property type="match status" value="1"/>
</dbReference>
<reference key="1">
    <citation type="journal article" date="2002" name="Nature">
        <title>Sequence and analysis of rice chromosome 4.</title>
        <authorList>
            <person name="Feng Q."/>
            <person name="Zhang Y."/>
            <person name="Hao P."/>
            <person name="Wang S."/>
            <person name="Fu G."/>
            <person name="Huang Y."/>
            <person name="Li Y."/>
            <person name="Zhu J."/>
            <person name="Liu Y."/>
            <person name="Hu X."/>
            <person name="Jia P."/>
            <person name="Zhang Y."/>
            <person name="Zhao Q."/>
            <person name="Ying K."/>
            <person name="Yu S."/>
            <person name="Tang Y."/>
            <person name="Weng Q."/>
            <person name="Zhang L."/>
            <person name="Lu Y."/>
            <person name="Mu J."/>
            <person name="Lu Y."/>
            <person name="Zhang L.S."/>
            <person name="Yu Z."/>
            <person name="Fan D."/>
            <person name="Liu X."/>
            <person name="Lu T."/>
            <person name="Li C."/>
            <person name="Wu Y."/>
            <person name="Sun T."/>
            <person name="Lei H."/>
            <person name="Li T."/>
            <person name="Hu H."/>
            <person name="Guan J."/>
            <person name="Wu M."/>
            <person name="Zhang R."/>
            <person name="Zhou B."/>
            <person name="Chen Z."/>
            <person name="Chen L."/>
            <person name="Jin Z."/>
            <person name="Wang R."/>
            <person name="Yin H."/>
            <person name="Cai Z."/>
            <person name="Ren S."/>
            <person name="Lv G."/>
            <person name="Gu W."/>
            <person name="Zhu G."/>
            <person name="Tu Y."/>
            <person name="Jia J."/>
            <person name="Zhang Y."/>
            <person name="Chen J."/>
            <person name="Kang H."/>
            <person name="Chen X."/>
            <person name="Shao C."/>
            <person name="Sun Y."/>
            <person name="Hu Q."/>
            <person name="Zhang X."/>
            <person name="Zhang W."/>
            <person name="Wang L."/>
            <person name="Ding C."/>
            <person name="Sheng H."/>
            <person name="Gu J."/>
            <person name="Chen S."/>
            <person name="Ni L."/>
            <person name="Zhu F."/>
            <person name="Chen W."/>
            <person name="Lan L."/>
            <person name="Lai Y."/>
            <person name="Cheng Z."/>
            <person name="Gu M."/>
            <person name="Jiang J."/>
            <person name="Li J."/>
            <person name="Hong G."/>
            <person name="Xue Y."/>
            <person name="Han B."/>
        </authorList>
    </citation>
    <scope>NUCLEOTIDE SEQUENCE [LARGE SCALE GENOMIC DNA]</scope>
    <source>
        <strain>cv. Nipponbare</strain>
    </source>
</reference>
<reference key="2">
    <citation type="journal article" date="2005" name="Nature">
        <title>The map-based sequence of the rice genome.</title>
        <authorList>
            <consortium name="International rice genome sequencing project (IRGSP)"/>
        </authorList>
    </citation>
    <scope>NUCLEOTIDE SEQUENCE [LARGE SCALE GENOMIC DNA]</scope>
    <source>
        <strain>cv. Nipponbare</strain>
    </source>
</reference>
<reference key="3">
    <citation type="journal article" date="2008" name="Nucleic Acids Res.">
        <title>The rice annotation project database (RAP-DB): 2008 update.</title>
        <authorList>
            <consortium name="The rice annotation project (RAP)"/>
        </authorList>
    </citation>
    <scope>GENOME REANNOTATION</scope>
    <source>
        <strain>cv. Nipponbare</strain>
    </source>
</reference>
<reference key="4">
    <citation type="journal article" date="2013" name="Rice">
        <title>Improvement of the Oryza sativa Nipponbare reference genome using next generation sequence and optical map data.</title>
        <authorList>
            <person name="Kawahara Y."/>
            <person name="de la Bastide M."/>
            <person name="Hamilton J.P."/>
            <person name="Kanamori H."/>
            <person name="McCombie W.R."/>
            <person name="Ouyang S."/>
            <person name="Schwartz D.C."/>
            <person name="Tanaka T."/>
            <person name="Wu J."/>
            <person name="Zhou S."/>
            <person name="Childs K.L."/>
            <person name="Davidson R.M."/>
            <person name="Lin H."/>
            <person name="Quesada-Ocampo L."/>
            <person name="Vaillancourt B."/>
            <person name="Sakai H."/>
            <person name="Lee S.S."/>
            <person name="Kim J."/>
            <person name="Numa H."/>
            <person name="Itoh T."/>
            <person name="Buell C.R."/>
            <person name="Matsumoto T."/>
        </authorList>
    </citation>
    <scope>GENOME REANNOTATION</scope>
    <source>
        <strain>cv. Nipponbare</strain>
    </source>
</reference>
<reference key="5">
    <citation type="journal article" date="2005" name="PLoS Biol.">
        <title>The genomes of Oryza sativa: a history of duplications.</title>
        <authorList>
            <person name="Yu J."/>
            <person name="Wang J."/>
            <person name="Lin W."/>
            <person name="Li S."/>
            <person name="Li H."/>
            <person name="Zhou J."/>
            <person name="Ni P."/>
            <person name="Dong W."/>
            <person name="Hu S."/>
            <person name="Zeng C."/>
            <person name="Zhang J."/>
            <person name="Zhang Y."/>
            <person name="Li R."/>
            <person name="Xu Z."/>
            <person name="Li S."/>
            <person name="Li X."/>
            <person name="Zheng H."/>
            <person name="Cong L."/>
            <person name="Lin L."/>
            <person name="Yin J."/>
            <person name="Geng J."/>
            <person name="Li G."/>
            <person name="Shi J."/>
            <person name="Liu J."/>
            <person name="Lv H."/>
            <person name="Li J."/>
            <person name="Wang J."/>
            <person name="Deng Y."/>
            <person name="Ran L."/>
            <person name="Shi X."/>
            <person name="Wang X."/>
            <person name="Wu Q."/>
            <person name="Li C."/>
            <person name="Ren X."/>
            <person name="Wang J."/>
            <person name="Wang X."/>
            <person name="Li D."/>
            <person name="Liu D."/>
            <person name="Zhang X."/>
            <person name="Ji Z."/>
            <person name="Zhao W."/>
            <person name="Sun Y."/>
            <person name="Zhang Z."/>
            <person name="Bao J."/>
            <person name="Han Y."/>
            <person name="Dong L."/>
            <person name="Ji J."/>
            <person name="Chen P."/>
            <person name="Wu S."/>
            <person name="Liu J."/>
            <person name="Xiao Y."/>
            <person name="Bu D."/>
            <person name="Tan J."/>
            <person name="Yang L."/>
            <person name="Ye C."/>
            <person name="Zhang J."/>
            <person name="Xu J."/>
            <person name="Zhou Y."/>
            <person name="Yu Y."/>
            <person name="Zhang B."/>
            <person name="Zhuang S."/>
            <person name="Wei H."/>
            <person name="Liu B."/>
            <person name="Lei M."/>
            <person name="Yu H."/>
            <person name="Li Y."/>
            <person name="Xu H."/>
            <person name="Wei S."/>
            <person name="He X."/>
            <person name="Fang L."/>
            <person name="Zhang Z."/>
            <person name="Zhang Y."/>
            <person name="Huang X."/>
            <person name="Su Z."/>
            <person name="Tong W."/>
            <person name="Li J."/>
            <person name="Tong Z."/>
            <person name="Li S."/>
            <person name="Ye J."/>
            <person name="Wang L."/>
            <person name="Fang L."/>
            <person name="Lei T."/>
            <person name="Chen C.-S."/>
            <person name="Chen H.-C."/>
            <person name="Xu Z."/>
            <person name="Li H."/>
            <person name="Huang H."/>
            <person name="Zhang F."/>
            <person name="Xu H."/>
            <person name="Li N."/>
            <person name="Zhao C."/>
            <person name="Li S."/>
            <person name="Dong L."/>
            <person name="Huang Y."/>
            <person name="Li L."/>
            <person name="Xi Y."/>
            <person name="Qi Q."/>
            <person name="Li W."/>
            <person name="Zhang B."/>
            <person name="Hu W."/>
            <person name="Zhang Y."/>
            <person name="Tian X."/>
            <person name="Jiao Y."/>
            <person name="Liang X."/>
            <person name="Jin J."/>
            <person name="Gao L."/>
            <person name="Zheng W."/>
            <person name="Hao B."/>
            <person name="Liu S.-M."/>
            <person name="Wang W."/>
            <person name="Yuan L."/>
            <person name="Cao M."/>
            <person name="McDermott J."/>
            <person name="Samudrala R."/>
            <person name="Wang J."/>
            <person name="Wong G.K.-S."/>
            <person name="Yang H."/>
        </authorList>
    </citation>
    <scope>NUCLEOTIDE SEQUENCE [LARGE SCALE GENOMIC DNA]</scope>
    <source>
        <strain>cv. Nipponbare</strain>
    </source>
</reference>
<reference key="6">
    <citation type="journal article" date="2003" name="Science">
        <title>Collection, mapping, and annotation of over 28,000 cDNA clones from japonica rice.</title>
        <authorList>
            <consortium name="The rice full-length cDNA consortium"/>
        </authorList>
    </citation>
    <scope>NUCLEOTIDE SEQUENCE [LARGE SCALE MRNA]</scope>
    <source>
        <strain>cv. Nipponbare</strain>
    </source>
</reference>
<comment type="function">
    <text evidence="1">Ubiquitin-like modifier involved in autophagosomes formation. May mediate the delivery of the autophagosomes to the vacuole via the microtubule cytoskeleton.</text>
</comment>
<comment type="subunit">
    <text evidence="2">Interacts with ATG4.</text>
</comment>
<comment type="subcellular location">
    <subcellularLocation>
        <location evidence="1">Cytoplasmic vesicle</location>
        <location evidence="1">Autophagosome membrane</location>
        <topology evidence="1">Lipid-anchor</topology>
    </subcellularLocation>
    <subcellularLocation>
        <location evidence="1">Vacuole membrane</location>
        <topology evidence="1">Lipid-anchor</topology>
    </subcellularLocation>
    <subcellularLocation>
        <location evidence="3">Cytoplasm</location>
        <location evidence="3">Cytoskeleton</location>
    </subcellularLocation>
</comment>
<comment type="PTM">
    <text evidence="1">The C-terminal 2 residues are removed by ATG4 to expose Gly-117 at the C-terminus. The C-terminal Gly is then amidated with phosphatidylethanolamine by an activating system similar to that for ubiquitin.</text>
</comment>
<comment type="similarity">
    <text evidence="4">Belongs to the ATG8 family.</text>
</comment>
<organism>
    <name type="scientific">Oryza sativa subsp. japonica</name>
    <name type="common">Rice</name>
    <dbReference type="NCBI Taxonomy" id="39947"/>
    <lineage>
        <taxon>Eukaryota</taxon>
        <taxon>Viridiplantae</taxon>
        <taxon>Streptophyta</taxon>
        <taxon>Embryophyta</taxon>
        <taxon>Tracheophyta</taxon>
        <taxon>Spermatophyta</taxon>
        <taxon>Magnoliopsida</taxon>
        <taxon>Liliopsida</taxon>
        <taxon>Poales</taxon>
        <taxon>Poaceae</taxon>
        <taxon>BOP clade</taxon>
        <taxon>Oryzoideae</taxon>
        <taxon>Oryzeae</taxon>
        <taxon>Oryzinae</taxon>
        <taxon>Oryza</taxon>
        <taxon>Oryza sativa</taxon>
    </lineage>
</organism>
<sequence>MAKSSFKLDHTLERRQAEANRIREKYSDRIPVIVEKAERSDIPDIDKKKYLVPADLTVGQFVYVVRKRIKLSPEKAIFIFVKNTLPPTAALMSAIYEENKDEDGFLYMTYSGENTFGLL</sequence>
<name>ATG8B_ORYSJ</name>
<feature type="chain" id="PRO_0000286927" description="Autophagy-related protein 8B">
    <location>
        <begin position="1"/>
        <end position="117"/>
    </location>
</feature>
<feature type="propeptide" id="PRO_0000286928" description="Removed in mature form" evidence="2">
    <location>
        <begin position="118"/>
        <end position="119"/>
    </location>
</feature>
<feature type="site" description="Cleavage; by ATG4" evidence="2">
    <location>
        <begin position="117"/>
        <end position="118"/>
    </location>
</feature>
<feature type="lipid moiety-binding region" description="Phosphatidylethanolamine amidated glycine" evidence="1">
    <location>
        <position position="117"/>
    </location>
</feature>
<proteinExistence type="inferred from homology"/>
<protein>
    <recommendedName>
        <fullName>Autophagy-related protein 8B</fullName>
    </recommendedName>
    <alternativeName>
        <fullName>Autophagy-related ubiquitin-like modifier ATG8B</fullName>
    </alternativeName>
</protein>
<keyword id="KW-0072">Autophagy</keyword>
<keyword id="KW-0963">Cytoplasm</keyword>
<keyword id="KW-0968">Cytoplasmic vesicle</keyword>
<keyword id="KW-0206">Cytoskeleton</keyword>
<keyword id="KW-0449">Lipoprotein</keyword>
<keyword id="KW-0472">Membrane</keyword>
<keyword id="KW-0493">Microtubule</keyword>
<keyword id="KW-0653">Protein transport</keyword>
<keyword id="KW-1185">Reference proteome</keyword>
<keyword id="KW-0813">Transport</keyword>
<keyword id="KW-0833">Ubl conjugation pathway</keyword>
<keyword id="KW-0926">Vacuole</keyword>
<gene>
    <name type="primary">ATG8B</name>
    <name type="synonym">APG8B</name>
    <name type="ordered locus">Os04g0624000</name>
    <name type="ordered locus">LOC_Os04g53240</name>
    <name type="ORF">OsJ_015525</name>
    <name type="ORF">OSJNBa0053K19.12</name>
</gene>
<accession>Q7XPR1</accession>
<accession>B7F704</accession>